<name>LOLA_NEIMA</name>
<keyword id="KW-0143">Chaperone</keyword>
<keyword id="KW-0574">Periplasm</keyword>
<keyword id="KW-0653">Protein transport</keyword>
<keyword id="KW-0732">Signal</keyword>
<keyword id="KW-0813">Transport</keyword>
<accession>P57067</accession>
<accession>A1IQN6</accession>
<gene>
    <name type="primary">lolA</name>
    <name type="ordered locus">NMA0830</name>
</gene>
<dbReference type="EMBL" id="AL157959">
    <property type="protein sequence ID" value="CAM08070.1"/>
    <property type="molecule type" value="Genomic_DNA"/>
</dbReference>
<dbReference type="PIR" id="C81928">
    <property type="entry name" value="C81928"/>
</dbReference>
<dbReference type="RefSeq" id="WP_002219647.1">
    <property type="nucleotide sequence ID" value="NC_003116.1"/>
</dbReference>
<dbReference type="SMR" id="P57067"/>
<dbReference type="TCDB" id="1.B.46.1.4">
    <property type="family name" value="the outer membrane lolab lipoprotein insertion apparatus (lolab) family"/>
</dbReference>
<dbReference type="EnsemblBacteria" id="CAM08070">
    <property type="protein sequence ID" value="CAM08070"/>
    <property type="gene ID" value="NMA0830"/>
</dbReference>
<dbReference type="GeneID" id="93386547"/>
<dbReference type="KEGG" id="nma:NMA0830"/>
<dbReference type="HOGENOM" id="CLU_087560_0_1_4"/>
<dbReference type="Proteomes" id="UP000000626">
    <property type="component" value="Chromosome"/>
</dbReference>
<dbReference type="GO" id="GO:0042597">
    <property type="term" value="C:periplasmic space"/>
    <property type="evidence" value="ECO:0007669"/>
    <property type="project" value="UniProtKB-SubCell"/>
</dbReference>
<dbReference type="GO" id="GO:0044874">
    <property type="term" value="P:lipoprotein localization to outer membrane"/>
    <property type="evidence" value="ECO:0007669"/>
    <property type="project" value="UniProtKB-UniRule"/>
</dbReference>
<dbReference type="GO" id="GO:0042953">
    <property type="term" value="P:lipoprotein transport"/>
    <property type="evidence" value="ECO:0007669"/>
    <property type="project" value="InterPro"/>
</dbReference>
<dbReference type="CDD" id="cd16325">
    <property type="entry name" value="LolA"/>
    <property type="match status" value="1"/>
</dbReference>
<dbReference type="FunFam" id="2.50.20.10:FF:000008">
    <property type="entry name" value="Outer-membrane lipoprotein carrier protein"/>
    <property type="match status" value="1"/>
</dbReference>
<dbReference type="Gene3D" id="2.50.20.10">
    <property type="entry name" value="Lipoprotein localisation LolA/LolB/LppX"/>
    <property type="match status" value="1"/>
</dbReference>
<dbReference type="HAMAP" id="MF_00240">
    <property type="entry name" value="LolA"/>
    <property type="match status" value="1"/>
</dbReference>
<dbReference type="InterPro" id="IPR029046">
    <property type="entry name" value="LolA/LolB/LppX"/>
</dbReference>
<dbReference type="InterPro" id="IPR004564">
    <property type="entry name" value="OM_lipoprot_carrier_LolA-like"/>
</dbReference>
<dbReference type="InterPro" id="IPR018323">
    <property type="entry name" value="OM_lipoprot_carrier_LolA_Pbac"/>
</dbReference>
<dbReference type="NCBIfam" id="TIGR00547">
    <property type="entry name" value="lolA"/>
    <property type="match status" value="1"/>
</dbReference>
<dbReference type="PANTHER" id="PTHR35869">
    <property type="entry name" value="OUTER-MEMBRANE LIPOPROTEIN CARRIER PROTEIN"/>
    <property type="match status" value="1"/>
</dbReference>
<dbReference type="PANTHER" id="PTHR35869:SF1">
    <property type="entry name" value="OUTER-MEMBRANE LIPOPROTEIN CARRIER PROTEIN"/>
    <property type="match status" value="1"/>
</dbReference>
<dbReference type="Pfam" id="PF03548">
    <property type="entry name" value="LolA"/>
    <property type="match status" value="1"/>
</dbReference>
<dbReference type="SUPFAM" id="SSF89392">
    <property type="entry name" value="Prokaryotic lipoproteins and lipoprotein localization factors"/>
    <property type="match status" value="1"/>
</dbReference>
<comment type="function">
    <text evidence="1">Participates in the translocation of lipoproteins from the inner membrane to the outer membrane. Only forms a complex with a lipoprotein if the residue after the N-terminal Cys is not an aspartate (The Asp acts as a targeting signal to indicate that the lipoprotein should stay in the inner membrane) (By similarity).</text>
</comment>
<comment type="subunit">
    <text evidence="1">Monomer.</text>
</comment>
<comment type="subcellular location">
    <subcellularLocation>
        <location evidence="1">Periplasm</location>
    </subcellularLocation>
</comment>
<comment type="similarity">
    <text evidence="3">Belongs to the LolA family.</text>
</comment>
<organism>
    <name type="scientific">Neisseria meningitidis serogroup A / serotype 4A (strain DSM 15465 / Z2491)</name>
    <dbReference type="NCBI Taxonomy" id="122587"/>
    <lineage>
        <taxon>Bacteria</taxon>
        <taxon>Pseudomonadati</taxon>
        <taxon>Pseudomonadota</taxon>
        <taxon>Betaproteobacteria</taxon>
        <taxon>Neisseriales</taxon>
        <taxon>Neisseriaceae</taxon>
        <taxon>Neisseria</taxon>
    </lineage>
</organism>
<evidence type="ECO:0000250" key="1"/>
<evidence type="ECO:0000255" key="2"/>
<evidence type="ECO:0000305" key="3"/>
<sequence>MMKPHNLFQFLAVCSLTVSVASAQAGAVDALKQFNNDADGISGSFTQTVQSKKKTQTAHGTFKILRPGLFKWEYTSPYKQTIVGDGQTVWLYDVDLAQVTKSSQDQAIGGSPAAILSNKTALESSYTLKEDGSSNGIDYVLATPKRNNAGYQYIRIGFKGGNLAAMQLKDSFGNQTSISFGGLNTNPQLSRGAFKFTPPKGVDVLSN</sequence>
<feature type="signal peptide" evidence="2">
    <location>
        <begin position="1"/>
        <end position="23"/>
    </location>
</feature>
<feature type="chain" id="PRO_0000018264" description="Outer-membrane lipoprotein carrier protein">
    <location>
        <begin position="24"/>
        <end position="207"/>
    </location>
</feature>
<reference key="1">
    <citation type="journal article" date="2000" name="Nature">
        <title>Complete DNA sequence of a serogroup A strain of Neisseria meningitidis Z2491.</title>
        <authorList>
            <person name="Parkhill J."/>
            <person name="Achtman M."/>
            <person name="James K.D."/>
            <person name="Bentley S.D."/>
            <person name="Churcher C.M."/>
            <person name="Klee S.R."/>
            <person name="Morelli G."/>
            <person name="Basham D."/>
            <person name="Brown D."/>
            <person name="Chillingworth T."/>
            <person name="Davies R.M."/>
            <person name="Davis P."/>
            <person name="Devlin K."/>
            <person name="Feltwell T."/>
            <person name="Hamlin N."/>
            <person name="Holroyd S."/>
            <person name="Jagels K."/>
            <person name="Leather S."/>
            <person name="Moule S."/>
            <person name="Mungall K.L."/>
            <person name="Quail M.A."/>
            <person name="Rajandream M.A."/>
            <person name="Rutherford K.M."/>
            <person name="Simmonds M."/>
            <person name="Skelton J."/>
            <person name="Whitehead S."/>
            <person name="Spratt B.G."/>
            <person name="Barrell B.G."/>
        </authorList>
    </citation>
    <scope>NUCLEOTIDE SEQUENCE [LARGE SCALE GENOMIC DNA]</scope>
    <source>
        <strain>DSM 15465 / Z2491</strain>
    </source>
</reference>
<protein>
    <recommendedName>
        <fullName>Outer-membrane lipoprotein carrier protein</fullName>
    </recommendedName>
</protein>
<proteinExistence type="inferred from homology"/>